<gene>
    <name evidence="1" type="primary">selU</name>
    <name type="ordered locus">NE0732</name>
</gene>
<evidence type="ECO:0000255" key="1">
    <source>
        <dbReference type="HAMAP-Rule" id="MF_01622"/>
    </source>
</evidence>
<accession>Q82WE9</accession>
<feature type="chain" id="PRO_0000210862" description="tRNA 2-selenouridine synthase">
    <location>
        <begin position="1"/>
        <end position="385"/>
    </location>
</feature>
<feature type="domain" description="Rhodanese" evidence="1">
    <location>
        <begin position="15"/>
        <end position="138"/>
    </location>
</feature>
<feature type="active site" description="S-selanylcysteine intermediate" evidence="1">
    <location>
        <position position="98"/>
    </location>
</feature>
<keyword id="KW-1185">Reference proteome</keyword>
<keyword id="KW-0711">Selenium</keyword>
<keyword id="KW-0808">Transferase</keyword>
<organism>
    <name type="scientific">Nitrosomonas europaea (strain ATCC 19718 / CIP 103999 / KCTC 2705 / NBRC 14298)</name>
    <dbReference type="NCBI Taxonomy" id="228410"/>
    <lineage>
        <taxon>Bacteria</taxon>
        <taxon>Pseudomonadati</taxon>
        <taxon>Pseudomonadota</taxon>
        <taxon>Betaproteobacteria</taxon>
        <taxon>Nitrosomonadales</taxon>
        <taxon>Nitrosomonadaceae</taxon>
        <taxon>Nitrosomonas</taxon>
    </lineage>
</organism>
<name>SELU_NITEU</name>
<protein>
    <recommendedName>
        <fullName evidence="1">tRNA 2-selenouridine synthase</fullName>
        <ecNumber evidence="1">2.9.1.3</ecNumber>
    </recommendedName>
</protein>
<sequence length="385" mass="43720">MRNPDIGIDDLTALFIADTPLIDVRAPVEFTQGSLPGAVNLPILNDEERALVGTTYKQQGSEAAIKLGYEMVSGSVKQNRLQQWLDFIHQHPRAILYCFRGGKRSQITQQWLRDTGIDSPLITGGYKRARQFLISTIDRFSEHRKLLVITGPTGSGKTRLIHDISNSHPVLDIEALARHRGSAFGGMSVPQPSQIDFENHLAVNLLKLEQNNLSEPVIVEDESRHTGKVYLPDSFFHHLRNSEIIWVDEPLATRVDNIFEDYILTTPIGQAQRIRQAIPPLASTVETREILRQQARQLFDKYAGALQAISKKLGGDRFQEVSEDLENARSDFENKNEIQSNKIWIEKLVRYYYDPLYLGSLQRRRVNPCFKGSGQAVMDYLQARK</sequence>
<reference key="1">
    <citation type="journal article" date="2003" name="J. Bacteriol.">
        <title>Complete genome sequence of the ammonia-oxidizing bacterium and obligate chemolithoautotroph Nitrosomonas europaea.</title>
        <authorList>
            <person name="Chain P."/>
            <person name="Lamerdin J.E."/>
            <person name="Larimer F.W."/>
            <person name="Regala W."/>
            <person name="Lao V."/>
            <person name="Land M.L."/>
            <person name="Hauser L."/>
            <person name="Hooper A.B."/>
            <person name="Klotz M.G."/>
            <person name="Norton J."/>
            <person name="Sayavedra-Soto L.A."/>
            <person name="Arciero D.M."/>
            <person name="Hommes N.G."/>
            <person name="Whittaker M.M."/>
            <person name="Arp D.J."/>
        </authorList>
    </citation>
    <scope>NUCLEOTIDE SEQUENCE [LARGE SCALE GENOMIC DNA]</scope>
    <source>
        <strain>ATCC 19718 / CIP 103999 / KCTC 2705 / NBRC 14298</strain>
    </source>
</reference>
<proteinExistence type="inferred from homology"/>
<dbReference type="EC" id="2.9.1.3" evidence="1"/>
<dbReference type="EMBL" id="AL954747">
    <property type="protein sequence ID" value="CAD84643.1"/>
    <property type="molecule type" value="Genomic_DNA"/>
</dbReference>
<dbReference type="SMR" id="Q82WE9"/>
<dbReference type="STRING" id="228410.NE0732"/>
<dbReference type="DNASU" id="1081670"/>
<dbReference type="GeneID" id="87103925"/>
<dbReference type="KEGG" id="neu:NE0732"/>
<dbReference type="eggNOG" id="COG2603">
    <property type="taxonomic scope" value="Bacteria"/>
</dbReference>
<dbReference type="HOGENOM" id="CLU_043456_1_0_4"/>
<dbReference type="OrthoDB" id="9808735at2"/>
<dbReference type="PhylomeDB" id="Q82WE9"/>
<dbReference type="Proteomes" id="UP000001416">
    <property type="component" value="Chromosome"/>
</dbReference>
<dbReference type="GO" id="GO:0016765">
    <property type="term" value="F:transferase activity, transferring alkyl or aryl (other than methyl) groups"/>
    <property type="evidence" value="ECO:0007669"/>
    <property type="project" value="UniProtKB-UniRule"/>
</dbReference>
<dbReference type="GO" id="GO:0043828">
    <property type="term" value="F:tRNA 2-selenouridine synthase activity"/>
    <property type="evidence" value="ECO:0007669"/>
    <property type="project" value="UniProtKB-EC"/>
</dbReference>
<dbReference type="GO" id="GO:0002098">
    <property type="term" value="P:tRNA wobble uridine modification"/>
    <property type="evidence" value="ECO:0007669"/>
    <property type="project" value="UniProtKB-UniRule"/>
</dbReference>
<dbReference type="CDD" id="cd01520">
    <property type="entry name" value="RHOD_YbbB"/>
    <property type="match status" value="1"/>
</dbReference>
<dbReference type="Gene3D" id="3.40.250.10">
    <property type="entry name" value="Rhodanese-like domain"/>
    <property type="match status" value="1"/>
</dbReference>
<dbReference type="HAMAP" id="MF_01622">
    <property type="entry name" value="tRNA_sel_U_synth"/>
    <property type="match status" value="1"/>
</dbReference>
<dbReference type="InterPro" id="IPR027417">
    <property type="entry name" value="P-loop_NTPase"/>
</dbReference>
<dbReference type="InterPro" id="IPR001763">
    <property type="entry name" value="Rhodanese-like_dom"/>
</dbReference>
<dbReference type="InterPro" id="IPR036873">
    <property type="entry name" value="Rhodanese-like_dom_sf"/>
</dbReference>
<dbReference type="InterPro" id="IPR017582">
    <property type="entry name" value="SelU"/>
</dbReference>
<dbReference type="NCBIfam" id="NF008750">
    <property type="entry name" value="PRK11784.1-2"/>
    <property type="match status" value="1"/>
</dbReference>
<dbReference type="NCBIfam" id="NF008751">
    <property type="entry name" value="PRK11784.1-3"/>
    <property type="match status" value="1"/>
</dbReference>
<dbReference type="NCBIfam" id="TIGR03167">
    <property type="entry name" value="tRNA_sel_U_synt"/>
    <property type="match status" value="1"/>
</dbReference>
<dbReference type="PANTHER" id="PTHR30401">
    <property type="entry name" value="TRNA 2-SELENOURIDINE SYNTHASE"/>
    <property type="match status" value="1"/>
</dbReference>
<dbReference type="PANTHER" id="PTHR30401:SF0">
    <property type="entry name" value="TRNA 2-SELENOURIDINE SYNTHASE"/>
    <property type="match status" value="1"/>
</dbReference>
<dbReference type="Pfam" id="PF00581">
    <property type="entry name" value="Rhodanese"/>
    <property type="match status" value="1"/>
</dbReference>
<dbReference type="SMART" id="SM00450">
    <property type="entry name" value="RHOD"/>
    <property type="match status" value="1"/>
</dbReference>
<dbReference type="SUPFAM" id="SSF52540">
    <property type="entry name" value="P-loop containing nucleoside triphosphate hydrolases"/>
    <property type="match status" value="1"/>
</dbReference>
<dbReference type="SUPFAM" id="SSF52821">
    <property type="entry name" value="Rhodanese/Cell cycle control phosphatase"/>
    <property type="match status" value="1"/>
</dbReference>
<dbReference type="PROSITE" id="PS50206">
    <property type="entry name" value="RHODANESE_3"/>
    <property type="match status" value="1"/>
</dbReference>
<comment type="function">
    <text evidence="1">Involved in the post-transcriptional modification of the uridine at the wobble position (U34) of tRNA(Lys), tRNA(Glu) and tRNA(Gln). Catalyzes the conversion of 2-thiouridine (S2U-RNA) to 2-selenouridine (Se2U-RNA). Acts in a two-step process involving geranylation of 2-thiouridine (S2U) to S-geranyl-2-thiouridine (geS2U) and subsequent selenation of the latter derivative to 2-selenouridine (Se2U) in the tRNA chain.</text>
</comment>
<comment type="catalytic activity">
    <reaction evidence="1">
        <text>5-methylaminomethyl-2-thiouridine(34) in tRNA + selenophosphate + (2E)-geranyl diphosphate + H2O + H(+) = 5-methylaminomethyl-2-selenouridine(34) in tRNA + (2E)-thiogeraniol + phosphate + diphosphate</text>
        <dbReference type="Rhea" id="RHEA:42716"/>
        <dbReference type="Rhea" id="RHEA-COMP:10195"/>
        <dbReference type="Rhea" id="RHEA-COMP:10196"/>
        <dbReference type="ChEBI" id="CHEBI:15377"/>
        <dbReference type="ChEBI" id="CHEBI:15378"/>
        <dbReference type="ChEBI" id="CHEBI:16144"/>
        <dbReference type="ChEBI" id="CHEBI:33019"/>
        <dbReference type="ChEBI" id="CHEBI:43474"/>
        <dbReference type="ChEBI" id="CHEBI:58057"/>
        <dbReference type="ChEBI" id="CHEBI:74455"/>
        <dbReference type="ChEBI" id="CHEBI:82743"/>
        <dbReference type="ChEBI" id="CHEBI:143703"/>
        <dbReference type="EC" id="2.9.1.3"/>
    </reaction>
    <physiologicalReaction direction="left-to-right" evidence="1">
        <dbReference type="Rhea" id="RHEA:42717"/>
    </physiologicalReaction>
</comment>
<comment type="catalytic activity">
    <reaction evidence="1">
        <text>5-methylaminomethyl-2-thiouridine(34) in tRNA + (2E)-geranyl diphosphate = 5-methylaminomethyl-S-(2E)-geranyl-thiouridine(34) in tRNA + diphosphate</text>
        <dbReference type="Rhea" id="RHEA:14085"/>
        <dbReference type="Rhea" id="RHEA-COMP:10195"/>
        <dbReference type="Rhea" id="RHEA-COMP:14654"/>
        <dbReference type="ChEBI" id="CHEBI:33019"/>
        <dbReference type="ChEBI" id="CHEBI:58057"/>
        <dbReference type="ChEBI" id="CHEBI:74455"/>
        <dbReference type="ChEBI" id="CHEBI:140632"/>
    </reaction>
    <physiologicalReaction direction="left-to-right" evidence="1">
        <dbReference type="Rhea" id="RHEA:14086"/>
    </physiologicalReaction>
</comment>
<comment type="catalytic activity">
    <reaction evidence="1">
        <text>5-methylaminomethyl-S-(2E)-geranyl-thiouridine(34) in tRNA + selenophosphate + H(+) = 5-methylaminomethyl-2-(Se-phospho)selenouridine(34) in tRNA + (2E)-thiogeraniol</text>
        <dbReference type="Rhea" id="RHEA:60172"/>
        <dbReference type="Rhea" id="RHEA-COMP:14654"/>
        <dbReference type="Rhea" id="RHEA-COMP:15523"/>
        <dbReference type="ChEBI" id="CHEBI:15378"/>
        <dbReference type="ChEBI" id="CHEBI:16144"/>
        <dbReference type="ChEBI" id="CHEBI:140632"/>
        <dbReference type="ChEBI" id="CHEBI:143702"/>
        <dbReference type="ChEBI" id="CHEBI:143703"/>
    </reaction>
    <physiologicalReaction direction="left-to-right" evidence="1">
        <dbReference type="Rhea" id="RHEA:60173"/>
    </physiologicalReaction>
</comment>
<comment type="catalytic activity">
    <reaction evidence="1">
        <text>5-methylaminomethyl-2-(Se-phospho)selenouridine(34) in tRNA + H2O = 5-methylaminomethyl-2-selenouridine(34) in tRNA + phosphate</text>
        <dbReference type="Rhea" id="RHEA:60176"/>
        <dbReference type="Rhea" id="RHEA-COMP:10196"/>
        <dbReference type="Rhea" id="RHEA-COMP:15523"/>
        <dbReference type="ChEBI" id="CHEBI:15377"/>
        <dbReference type="ChEBI" id="CHEBI:43474"/>
        <dbReference type="ChEBI" id="CHEBI:82743"/>
        <dbReference type="ChEBI" id="CHEBI:143702"/>
    </reaction>
    <physiologicalReaction direction="left-to-right" evidence="1">
        <dbReference type="Rhea" id="RHEA:60177"/>
    </physiologicalReaction>
</comment>
<comment type="subunit">
    <text evidence="1">Monomer.</text>
</comment>
<comment type="similarity">
    <text evidence="1">Belongs to the SelU family.</text>
</comment>